<gene>
    <name evidence="1" type="primary">hisI</name>
    <name type="ordered locus">Mflv_3606</name>
</gene>
<protein>
    <recommendedName>
        <fullName evidence="1">Phosphoribosyl-AMP cyclohydrolase</fullName>
        <shortName evidence="1">PRA-CH</shortName>
        <ecNumber evidence="1">3.5.4.19</ecNumber>
    </recommendedName>
</protein>
<proteinExistence type="inferred from homology"/>
<name>HIS3_MYCGI</name>
<sequence>MSLDPTIAARLKRNADGLFTAVVQERGSGDVLMVAWMDDDALARTLETREATYFSRSRGEQWIKGRTSGHTQHVHSVRLDCDGDTVLLVVDQVGGACHTGDHSCFDADLLLDPEA</sequence>
<evidence type="ECO:0000255" key="1">
    <source>
        <dbReference type="HAMAP-Rule" id="MF_01021"/>
    </source>
</evidence>
<keyword id="KW-0028">Amino-acid biosynthesis</keyword>
<keyword id="KW-0963">Cytoplasm</keyword>
<keyword id="KW-0368">Histidine biosynthesis</keyword>
<keyword id="KW-0378">Hydrolase</keyword>
<keyword id="KW-0460">Magnesium</keyword>
<keyword id="KW-0479">Metal-binding</keyword>
<keyword id="KW-0862">Zinc</keyword>
<organism>
    <name type="scientific">Mycolicibacterium gilvum (strain PYR-GCK)</name>
    <name type="common">Mycobacterium gilvum (strain PYR-GCK)</name>
    <dbReference type="NCBI Taxonomy" id="350054"/>
    <lineage>
        <taxon>Bacteria</taxon>
        <taxon>Bacillati</taxon>
        <taxon>Actinomycetota</taxon>
        <taxon>Actinomycetes</taxon>
        <taxon>Mycobacteriales</taxon>
        <taxon>Mycobacteriaceae</taxon>
        <taxon>Mycolicibacterium</taxon>
    </lineage>
</organism>
<dbReference type="EC" id="3.5.4.19" evidence="1"/>
<dbReference type="EMBL" id="CP000656">
    <property type="protein sequence ID" value="ABP46080.1"/>
    <property type="molecule type" value="Genomic_DNA"/>
</dbReference>
<dbReference type="SMR" id="A4T9N1"/>
<dbReference type="STRING" id="350054.Mflv_3606"/>
<dbReference type="KEGG" id="mgi:Mflv_3606"/>
<dbReference type="eggNOG" id="COG0139">
    <property type="taxonomic scope" value="Bacteria"/>
</dbReference>
<dbReference type="HOGENOM" id="CLU_048577_5_1_11"/>
<dbReference type="OrthoDB" id="9795769at2"/>
<dbReference type="UniPathway" id="UPA00031">
    <property type="reaction ID" value="UER00008"/>
</dbReference>
<dbReference type="GO" id="GO:0005737">
    <property type="term" value="C:cytoplasm"/>
    <property type="evidence" value="ECO:0007669"/>
    <property type="project" value="UniProtKB-SubCell"/>
</dbReference>
<dbReference type="GO" id="GO:0000287">
    <property type="term" value="F:magnesium ion binding"/>
    <property type="evidence" value="ECO:0007669"/>
    <property type="project" value="UniProtKB-UniRule"/>
</dbReference>
<dbReference type="GO" id="GO:0004635">
    <property type="term" value="F:phosphoribosyl-AMP cyclohydrolase activity"/>
    <property type="evidence" value="ECO:0007669"/>
    <property type="project" value="UniProtKB-UniRule"/>
</dbReference>
<dbReference type="GO" id="GO:0008270">
    <property type="term" value="F:zinc ion binding"/>
    <property type="evidence" value="ECO:0007669"/>
    <property type="project" value="UniProtKB-UniRule"/>
</dbReference>
<dbReference type="GO" id="GO:0000105">
    <property type="term" value="P:L-histidine biosynthetic process"/>
    <property type="evidence" value="ECO:0007669"/>
    <property type="project" value="UniProtKB-UniRule"/>
</dbReference>
<dbReference type="FunFam" id="3.10.20.810:FF:000001">
    <property type="entry name" value="Histidine biosynthesis bifunctional protein HisIE"/>
    <property type="match status" value="1"/>
</dbReference>
<dbReference type="Gene3D" id="3.10.20.810">
    <property type="entry name" value="Phosphoribosyl-AMP cyclohydrolase"/>
    <property type="match status" value="1"/>
</dbReference>
<dbReference type="HAMAP" id="MF_01021">
    <property type="entry name" value="HisI"/>
    <property type="match status" value="1"/>
</dbReference>
<dbReference type="InterPro" id="IPR026660">
    <property type="entry name" value="PRA-CH"/>
</dbReference>
<dbReference type="InterPro" id="IPR002496">
    <property type="entry name" value="PRib_AMP_CycHydrolase_dom"/>
</dbReference>
<dbReference type="InterPro" id="IPR038019">
    <property type="entry name" value="PRib_AMP_CycHydrolase_sf"/>
</dbReference>
<dbReference type="NCBIfam" id="NF000768">
    <property type="entry name" value="PRK00051.1"/>
    <property type="match status" value="1"/>
</dbReference>
<dbReference type="PANTHER" id="PTHR42945">
    <property type="entry name" value="HISTIDINE BIOSYNTHESIS BIFUNCTIONAL PROTEIN"/>
    <property type="match status" value="1"/>
</dbReference>
<dbReference type="PANTHER" id="PTHR42945:SF11">
    <property type="entry name" value="PHOSPHORIBOSYL-AMP CYCLOHYDROLASE"/>
    <property type="match status" value="1"/>
</dbReference>
<dbReference type="Pfam" id="PF01502">
    <property type="entry name" value="PRA-CH"/>
    <property type="match status" value="1"/>
</dbReference>
<dbReference type="SUPFAM" id="SSF141734">
    <property type="entry name" value="HisI-like"/>
    <property type="match status" value="1"/>
</dbReference>
<feature type="chain" id="PRO_1000084181" description="Phosphoribosyl-AMP cyclohydrolase">
    <location>
        <begin position="1"/>
        <end position="115"/>
    </location>
</feature>
<feature type="binding site" evidence="1">
    <location>
        <position position="80"/>
    </location>
    <ligand>
        <name>Mg(2+)</name>
        <dbReference type="ChEBI" id="CHEBI:18420"/>
    </ligand>
</feature>
<feature type="binding site" evidence="1">
    <location>
        <position position="81"/>
    </location>
    <ligand>
        <name>Zn(2+)</name>
        <dbReference type="ChEBI" id="CHEBI:29105"/>
        <note>ligand shared between dimeric partners</note>
    </ligand>
</feature>
<feature type="binding site" evidence="1">
    <location>
        <position position="82"/>
    </location>
    <ligand>
        <name>Mg(2+)</name>
        <dbReference type="ChEBI" id="CHEBI:18420"/>
    </ligand>
</feature>
<feature type="binding site" evidence="1">
    <location>
        <position position="84"/>
    </location>
    <ligand>
        <name>Mg(2+)</name>
        <dbReference type="ChEBI" id="CHEBI:18420"/>
    </ligand>
</feature>
<feature type="binding site" evidence="1">
    <location>
        <position position="97"/>
    </location>
    <ligand>
        <name>Zn(2+)</name>
        <dbReference type="ChEBI" id="CHEBI:29105"/>
        <note>ligand shared between dimeric partners</note>
    </ligand>
</feature>
<feature type="binding site" evidence="1">
    <location>
        <position position="104"/>
    </location>
    <ligand>
        <name>Zn(2+)</name>
        <dbReference type="ChEBI" id="CHEBI:29105"/>
        <note>ligand shared between dimeric partners</note>
    </ligand>
</feature>
<accession>A4T9N1</accession>
<reference key="1">
    <citation type="submission" date="2007-04" db="EMBL/GenBank/DDBJ databases">
        <title>Complete sequence of chromosome of Mycobacterium gilvum PYR-GCK.</title>
        <authorList>
            <consortium name="US DOE Joint Genome Institute"/>
            <person name="Copeland A."/>
            <person name="Lucas S."/>
            <person name="Lapidus A."/>
            <person name="Barry K."/>
            <person name="Detter J.C."/>
            <person name="Glavina del Rio T."/>
            <person name="Hammon N."/>
            <person name="Israni S."/>
            <person name="Dalin E."/>
            <person name="Tice H."/>
            <person name="Pitluck S."/>
            <person name="Chain P."/>
            <person name="Malfatti S."/>
            <person name="Shin M."/>
            <person name="Vergez L."/>
            <person name="Schmutz J."/>
            <person name="Larimer F."/>
            <person name="Land M."/>
            <person name="Hauser L."/>
            <person name="Kyrpides N."/>
            <person name="Mikhailova N."/>
            <person name="Miller C."/>
            <person name="Richardson P."/>
        </authorList>
    </citation>
    <scope>NUCLEOTIDE SEQUENCE [LARGE SCALE GENOMIC DNA]</scope>
    <source>
        <strain>PYR-GCK</strain>
    </source>
</reference>
<comment type="function">
    <text evidence="1">Catalyzes the hydrolysis of the adenine ring of phosphoribosyl-AMP.</text>
</comment>
<comment type="catalytic activity">
    <reaction evidence="1">
        <text>1-(5-phospho-beta-D-ribosyl)-5'-AMP + H2O = 1-(5-phospho-beta-D-ribosyl)-5-[(5-phospho-beta-D-ribosylamino)methylideneamino]imidazole-4-carboxamide</text>
        <dbReference type="Rhea" id="RHEA:20049"/>
        <dbReference type="ChEBI" id="CHEBI:15377"/>
        <dbReference type="ChEBI" id="CHEBI:58435"/>
        <dbReference type="ChEBI" id="CHEBI:59457"/>
        <dbReference type="EC" id="3.5.4.19"/>
    </reaction>
</comment>
<comment type="cofactor">
    <cofactor evidence="1">
        <name>Mg(2+)</name>
        <dbReference type="ChEBI" id="CHEBI:18420"/>
    </cofactor>
    <text evidence="1">Binds 1 Mg(2+) ion per subunit.</text>
</comment>
<comment type="cofactor">
    <cofactor evidence="1">
        <name>Zn(2+)</name>
        <dbReference type="ChEBI" id="CHEBI:29105"/>
    </cofactor>
    <text evidence="1">Binds 1 zinc ion per subunit.</text>
</comment>
<comment type="pathway">
    <text evidence="1">Amino-acid biosynthesis; L-histidine biosynthesis; L-histidine from 5-phospho-alpha-D-ribose 1-diphosphate: step 3/9.</text>
</comment>
<comment type="subunit">
    <text evidence="1">Homodimer.</text>
</comment>
<comment type="subcellular location">
    <subcellularLocation>
        <location evidence="1">Cytoplasm</location>
    </subcellularLocation>
</comment>
<comment type="similarity">
    <text evidence="1">Belongs to the PRA-CH family.</text>
</comment>